<proteinExistence type="evidence at protein level"/>
<dbReference type="EMBL" id="AK005862">
    <property type="protein sequence ID" value="BAB24282.1"/>
    <property type="molecule type" value="mRNA"/>
</dbReference>
<dbReference type="EMBL" id="BC049736">
    <property type="protein sequence ID" value="AAH49736.1"/>
    <property type="molecule type" value="mRNA"/>
</dbReference>
<dbReference type="CCDS" id="CCDS20224.1">
    <molecule id="Q9DAG4-1"/>
</dbReference>
<dbReference type="RefSeq" id="NP_001342695.1">
    <molecule id="Q9DAG4-2"/>
    <property type="nucleotide sequence ID" value="NM_001355766.1"/>
</dbReference>
<dbReference type="RefSeq" id="NP_083101.1">
    <molecule id="Q9DAG4-1"/>
    <property type="nucleotide sequence ID" value="NM_028825.3"/>
</dbReference>
<dbReference type="RefSeq" id="XP_006506769.1">
    <property type="nucleotide sequence ID" value="XM_006506706.2"/>
</dbReference>
<dbReference type="RefSeq" id="XP_030111496.1">
    <molecule id="Q9DAG4-2"/>
    <property type="nucleotide sequence ID" value="XM_030255636.1"/>
</dbReference>
<dbReference type="PDB" id="8IYJ">
    <property type="method" value="EM"/>
    <property type="resolution" value="3.50 A"/>
    <property type="chains" value="P3/P4/P5/P6/P7=1-180"/>
</dbReference>
<dbReference type="PDBsum" id="8IYJ"/>
<dbReference type="EMDB" id="EMD-35823"/>
<dbReference type="SMR" id="Q9DAG4"/>
<dbReference type="FunCoup" id="Q9DAG4">
    <property type="interactions" value="197"/>
</dbReference>
<dbReference type="STRING" id="10090.ENSMUSP00000066786"/>
<dbReference type="GlyGen" id="Q9DAG4">
    <property type="glycosylation" value="1 site"/>
</dbReference>
<dbReference type="PhosphoSitePlus" id="Q9DAG4"/>
<dbReference type="PaxDb" id="10090-ENSMUSP00000066786"/>
<dbReference type="ProteomicsDB" id="263286">
    <molecule id="Q9DAG4-1"/>
</dbReference>
<dbReference type="ProteomicsDB" id="263287">
    <molecule id="Q9DAG4-2"/>
</dbReference>
<dbReference type="Antibodypedia" id="51969">
    <property type="antibodies" value="84 antibodies from 19 providers"/>
</dbReference>
<dbReference type="Ensembl" id="ENSMUST00000063456.5">
    <molecule id="Q9DAG4-1"/>
    <property type="protein sequence ID" value="ENSMUSP00000066786.5"/>
    <property type="gene ID" value="ENSMUSG00000051896.5"/>
</dbReference>
<dbReference type="GeneID" id="74221"/>
<dbReference type="KEGG" id="mmu:74221"/>
<dbReference type="UCSC" id="uc009cgd.1">
    <molecule id="Q9DAG4-1"/>
    <property type="organism name" value="mouse"/>
</dbReference>
<dbReference type="UCSC" id="uc009cge.1">
    <molecule id="Q9DAG4-2"/>
    <property type="organism name" value="mouse"/>
</dbReference>
<dbReference type="AGR" id="MGI:1921471"/>
<dbReference type="CTD" id="200523"/>
<dbReference type="MGI" id="MGI:1921471">
    <property type="gene designation" value="Spmip9"/>
</dbReference>
<dbReference type="VEuPathDB" id="HostDB:ENSMUSG00000051896"/>
<dbReference type="eggNOG" id="ENOG502T74N">
    <property type="taxonomic scope" value="Eukaryota"/>
</dbReference>
<dbReference type="GeneTree" id="ENSGT00390000012177"/>
<dbReference type="HOGENOM" id="CLU_132395_0_0_1"/>
<dbReference type="InParanoid" id="Q9DAG4"/>
<dbReference type="OMA" id="SYMVDYK"/>
<dbReference type="OrthoDB" id="9514831at2759"/>
<dbReference type="TreeFam" id="TF337872"/>
<dbReference type="BioGRID-ORCS" id="74221">
    <property type="hits" value="1 hit in 76 CRISPR screens"/>
</dbReference>
<dbReference type="ChiTaRS" id="Tex37">
    <property type="organism name" value="mouse"/>
</dbReference>
<dbReference type="PRO" id="PR:Q9DAG4"/>
<dbReference type="Proteomes" id="UP000000589">
    <property type="component" value="Chromosome 6"/>
</dbReference>
<dbReference type="RNAct" id="Q9DAG4">
    <property type="molecule type" value="protein"/>
</dbReference>
<dbReference type="Bgee" id="ENSMUSG00000051896">
    <property type="expression patterns" value="Expressed in seminiferous tubule of testis and 17 other cell types or tissues"/>
</dbReference>
<dbReference type="GO" id="GO:0160111">
    <property type="term" value="C:axonemal A tubule inner sheath"/>
    <property type="evidence" value="ECO:0000314"/>
    <property type="project" value="MGI"/>
</dbReference>
<dbReference type="GO" id="GO:0005737">
    <property type="term" value="C:cytoplasm"/>
    <property type="evidence" value="ECO:0000250"/>
    <property type="project" value="UniProtKB"/>
</dbReference>
<dbReference type="GO" id="GO:0005634">
    <property type="term" value="C:nucleus"/>
    <property type="evidence" value="ECO:0007669"/>
    <property type="project" value="UniProtKB-SubCell"/>
</dbReference>
<dbReference type="GO" id="GO:0036126">
    <property type="term" value="C:sperm flagellum"/>
    <property type="evidence" value="ECO:0000314"/>
    <property type="project" value="UniProtKB"/>
</dbReference>
<dbReference type="GO" id="GO:0030317">
    <property type="term" value="P:flagellated sperm motility"/>
    <property type="evidence" value="ECO:0000314"/>
    <property type="project" value="UniProtKB"/>
</dbReference>
<dbReference type="InterPro" id="IPR029361">
    <property type="entry name" value="SPMIP9"/>
</dbReference>
<dbReference type="PANTHER" id="PTHR36882">
    <property type="entry name" value="TESTIS-EXPRESSED SEQUENCE 37 PROTEIN"/>
    <property type="match status" value="1"/>
</dbReference>
<dbReference type="PANTHER" id="PTHR36882:SF1">
    <property type="entry name" value="TESTIS-EXPRESSED SEQUENCE 37 PROTEIN"/>
    <property type="match status" value="1"/>
</dbReference>
<dbReference type="Pfam" id="PF15217">
    <property type="entry name" value="TSC21"/>
    <property type="match status" value="1"/>
</dbReference>
<feature type="chain" id="PRO_0000304990" description="Protein SPMIP9">
    <location>
        <begin position="1"/>
        <end position="180"/>
    </location>
</feature>
<feature type="splice variant" id="VSP_028172" description="In isoform 2." evidence="5">
    <location>
        <position position="41"/>
    </location>
</feature>
<gene>
    <name type="primary">Spmip9</name>
    <name evidence="7" type="synonym">Tex37</name>
    <name evidence="6" type="synonym">Tsc21</name>
</gene>
<comment type="function">
    <text evidence="4">Microtubule inner protein (MIP) part of the dynein-decorated doublet microtubules (DMTs) in flagella axoneme.</text>
</comment>
<comment type="subunit">
    <text evidence="4">Microtubule inner protein component of sperm flagellar doublet microtubules.</text>
</comment>
<comment type="subcellular location">
    <subcellularLocation>
        <location evidence="2">Nucleus</location>
    </subcellularLocation>
    <subcellularLocation>
        <location evidence="1">Cytoplasm</location>
    </subcellularLocation>
    <subcellularLocation>
        <location evidence="4">Cytoplasm</location>
        <location evidence="4">Cytoskeleton</location>
        <location evidence="4">Flagellum axoneme</location>
    </subcellularLocation>
    <text evidence="1">Present in the germ cell lineage at all stages.</text>
</comment>
<comment type="alternative products">
    <event type="alternative splicing"/>
    <isoform>
        <id>Q9DAG4-1</id>
        <name>1</name>
        <sequence type="displayed"/>
    </isoform>
    <isoform>
        <id>Q9DAG4-2</id>
        <name>2</name>
        <sequence type="described" ref="VSP_028172"/>
    </isoform>
</comment>
<comment type="tissue specificity">
    <text evidence="2 3">Only detected after the mouse is 35 days old. Expression increases gradually from day 35 to 6 months, and remains stable after 54 days (PubMed:17091336, PubMed:29563520). Exclusively expressed in the epididymis and testis (PubMed:17091336, PubMed:29563520).</text>
</comment>
<comment type="disruption phenotype">
    <text evidence="3">Deficeint mice are fertile and have no detectable defects in the testis/body weight ratio, epididymal sperm count, and testicular and epididymal histology.</text>
</comment>
<organism>
    <name type="scientific">Mus musculus</name>
    <name type="common">Mouse</name>
    <dbReference type="NCBI Taxonomy" id="10090"/>
    <lineage>
        <taxon>Eukaryota</taxon>
        <taxon>Metazoa</taxon>
        <taxon>Chordata</taxon>
        <taxon>Craniata</taxon>
        <taxon>Vertebrata</taxon>
        <taxon>Euteleostomi</taxon>
        <taxon>Mammalia</taxon>
        <taxon>Eutheria</taxon>
        <taxon>Euarchontoglires</taxon>
        <taxon>Glires</taxon>
        <taxon>Rodentia</taxon>
        <taxon>Myomorpha</taxon>
        <taxon>Muroidea</taxon>
        <taxon>Muridae</taxon>
        <taxon>Murinae</taxon>
        <taxon>Mus</taxon>
        <taxon>Mus</taxon>
    </lineage>
</organism>
<reference key="1">
    <citation type="journal article" date="2005" name="Science">
        <title>The transcriptional landscape of the mammalian genome.</title>
        <authorList>
            <person name="Carninci P."/>
            <person name="Kasukawa T."/>
            <person name="Katayama S."/>
            <person name="Gough J."/>
            <person name="Frith M.C."/>
            <person name="Maeda N."/>
            <person name="Oyama R."/>
            <person name="Ravasi T."/>
            <person name="Lenhard B."/>
            <person name="Wells C."/>
            <person name="Kodzius R."/>
            <person name="Shimokawa K."/>
            <person name="Bajic V.B."/>
            <person name="Brenner S.E."/>
            <person name="Batalov S."/>
            <person name="Forrest A.R."/>
            <person name="Zavolan M."/>
            <person name="Davis M.J."/>
            <person name="Wilming L.G."/>
            <person name="Aidinis V."/>
            <person name="Allen J.E."/>
            <person name="Ambesi-Impiombato A."/>
            <person name="Apweiler R."/>
            <person name="Aturaliya R.N."/>
            <person name="Bailey T.L."/>
            <person name="Bansal M."/>
            <person name="Baxter L."/>
            <person name="Beisel K.W."/>
            <person name="Bersano T."/>
            <person name="Bono H."/>
            <person name="Chalk A.M."/>
            <person name="Chiu K.P."/>
            <person name="Choudhary V."/>
            <person name="Christoffels A."/>
            <person name="Clutterbuck D.R."/>
            <person name="Crowe M.L."/>
            <person name="Dalla E."/>
            <person name="Dalrymple B.P."/>
            <person name="de Bono B."/>
            <person name="Della Gatta G."/>
            <person name="di Bernardo D."/>
            <person name="Down T."/>
            <person name="Engstrom P."/>
            <person name="Fagiolini M."/>
            <person name="Faulkner G."/>
            <person name="Fletcher C.F."/>
            <person name="Fukushima T."/>
            <person name="Furuno M."/>
            <person name="Futaki S."/>
            <person name="Gariboldi M."/>
            <person name="Georgii-Hemming P."/>
            <person name="Gingeras T.R."/>
            <person name="Gojobori T."/>
            <person name="Green R.E."/>
            <person name="Gustincich S."/>
            <person name="Harbers M."/>
            <person name="Hayashi Y."/>
            <person name="Hensch T.K."/>
            <person name="Hirokawa N."/>
            <person name="Hill D."/>
            <person name="Huminiecki L."/>
            <person name="Iacono M."/>
            <person name="Ikeo K."/>
            <person name="Iwama A."/>
            <person name="Ishikawa T."/>
            <person name="Jakt M."/>
            <person name="Kanapin A."/>
            <person name="Katoh M."/>
            <person name="Kawasawa Y."/>
            <person name="Kelso J."/>
            <person name="Kitamura H."/>
            <person name="Kitano H."/>
            <person name="Kollias G."/>
            <person name="Krishnan S.P."/>
            <person name="Kruger A."/>
            <person name="Kummerfeld S.K."/>
            <person name="Kurochkin I.V."/>
            <person name="Lareau L.F."/>
            <person name="Lazarevic D."/>
            <person name="Lipovich L."/>
            <person name="Liu J."/>
            <person name="Liuni S."/>
            <person name="McWilliam S."/>
            <person name="Madan Babu M."/>
            <person name="Madera M."/>
            <person name="Marchionni L."/>
            <person name="Matsuda H."/>
            <person name="Matsuzawa S."/>
            <person name="Miki H."/>
            <person name="Mignone F."/>
            <person name="Miyake S."/>
            <person name="Morris K."/>
            <person name="Mottagui-Tabar S."/>
            <person name="Mulder N."/>
            <person name="Nakano N."/>
            <person name="Nakauchi H."/>
            <person name="Ng P."/>
            <person name="Nilsson R."/>
            <person name="Nishiguchi S."/>
            <person name="Nishikawa S."/>
            <person name="Nori F."/>
            <person name="Ohara O."/>
            <person name="Okazaki Y."/>
            <person name="Orlando V."/>
            <person name="Pang K.C."/>
            <person name="Pavan W.J."/>
            <person name="Pavesi G."/>
            <person name="Pesole G."/>
            <person name="Petrovsky N."/>
            <person name="Piazza S."/>
            <person name="Reed J."/>
            <person name="Reid J.F."/>
            <person name="Ring B.Z."/>
            <person name="Ringwald M."/>
            <person name="Rost B."/>
            <person name="Ruan Y."/>
            <person name="Salzberg S.L."/>
            <person name="Sandelin A."/>
            <person name="Schneider C."/>
            <person name="Schoenbach C."/>
            <person name="Sekiguchi K."/>
            <person name="Semple C.A."/>
            <person name="Seno S."/>
            <person name="Sessa L."/>
            <person name="Sheng Y."/>
            <person name="Shibata Y."/>
            <person name="Shimada H."/>
            <person name="Shimada K."/>
            <person name="Silva D."/>
            <person name="Sinclair B."/>
            <person name="Sperling S."/>
            <person name="Stupka E."/>
            <person name="Sugiura K."/>
            <person name="Sultana R."/>
            <person name="Takenaka Y."/>
            <person name="Taki K."/>
            <person name="Tammoja K."/>
            <person name="Tan S.L."/>
            <person name="Tang S."/>
            <person name="Taylor M.S."/>
            <person name="Tegner J."/>
            <person name="Teichmann S.A."/>
            <person name="Ueda H.R."/>
            <person name="van Nimwegen E."/>
            <person name="Verardo R."/>
            <person name="Wei C.L."/>
            <person name="Yagi K."/>
            <person name="Yamanishi H."/>
            <person name="Zabarovsky E."/>
            <person name="Zhu S."/>
            <person name="Zimmer A."/>
            <person name="Hide W."/>
            <person name="Bult C."/>
            <person name="Grimmond S.M."/>
            <person name="Teasdale R.D."/>
            <person name="Liu E.T."/>
            <person name="Brusic V."/>
            <person name="Quackenbush J."/>
            <person name="Wahlestedt C."/>
            <person name="Mattick J.S."/>
            <person name="Hume D.A."/>
            <person name="Kai C."/>
            <person name="Sasaki D."/>
            <person name="Tomaru Y."/>
            <person name="Fukuda S."/>
            <person name="Kanamori-Katayama M."/>
            <person name="Suzuki M."/>
            <person name="Aoki J."/>
            <person name="Arakawa T."/>
            <person name="Iida J."/>
            <person name="Imamura K."/>
            <person name="Itoh M."/>
            <person name="Kato T."/>
            <person name="Kawaji H."/>
            <person name="Kawagashira N."/>
            <person name="Kawashima T."/>
            <person name="Kojima M."/>
            <person name="Kondo S."/>
            <person name="Konno H."/>
            <person name="Nakano K."/>
            <person name="Ninomiya N."/>
            <person name="Nishio T."/>
            <person name="Okada M."/>
            <person name="Plessy C."/>
            <person name="Shibata K."/>
            <person name="Shiraki T."/>
            <person name="Suzuki S."/>
            <person name="Tagami M."/>
            <person name="Waki K."/>
            <person name="Watahiki A."/>
            <person name="Okamura-Oho Y."/>
            <person name="Suzuki H."/>
            <person name="Kawai J."/>
            <person name="Hayashizaki Y."/>
        </authorList>
    </citation>
    <scope>NUCLEOTIDE SEQUENCE [LARGE SCALE MRNA] (ISOFORM 1)</scope>
    <source>
        <strain>C57BL/6J</strain>
        <tissue>Testis</tissue>
    </source>
</reference>
<reference key="2">
    <citation type="journal article" date="2004" name="Genome Res.">
        <title>The status, quality, and expansion of the NIH full-length cDNA project: the Mammalian Gene Collection (MGC).</title>
        <authorList>
            <consortium name="The MGC Project Team"/>
        </authorList>
    </citation>
    <scope>NUCLEOTIDE SEQUENCE [LARGE SCALE MRNA] (ISOFORM 2)</scope>
    <source>
        <tissue>Testis</tissue>
    </source>
</reference>
<reference key="3">
    <citation type="journal article" date="2007" name="Mol. Biol. Rep.">
        <title>Identification and characteristics of a novel testis-specific gene, Tsc21, in mice and human.</title>
        <authorList>
            <person name="Yu Z."/>
            <person name="Tang A."/>
            <person name="Gui Y."/>
            <person name="Guo X."/>
            <person name="Zhu H."/>
            <person name="Long Y."/>
            <person name="Li Z."/>
            <person name="Cai Z."/>
        </authorList>
    </citation>
    <scope>SUBCELLULAR LOCATION</scope>
    <scope>TISSUE SPECIFICITY</scope>
</reference>
<reference key="4">
    <citation type="journal article" date="2018" name="Sci. Rep.">
        <title>The evolutionarily conserved genes: Tex37, Ccdc73, Prss55 and Nxt2 are dispensable for fertility in mice.</title>
        <authorList>
            <person name="Khan M."/>
            <person name="Jabeen N."/>
            <person name="Khan T."/>
            <person name="Hussain H.M.J."/>
            <person name="Ali A."/>
            <person name="Khan R."/>
            <person name="Jiang L."/>
            <person name="Li T."/>
            <person name="Tao Q."/>
            <person name="Zhang X."/>
            <person name="Yin H."/>
            <person name="Yu C."/>
            <person name="Jiang X."/>
            <person name="Shi Q."/>
        </authorList>
    </citation>
    <scope>DISRUPTION PHENOTYPE</scope>
    <scope>TISSUE SPECIFICITY</scope>
</reference>
<reference evidence="9" key="5">
    <citation type="journal article" date="2023" name="Cell">
        <title>Structures of sperm flagellar doublet microtubules expand the genetic spectrum of male infertility.</title>
        <authorList>
            <person name="Zhou L."/>
            <person name="Liu H."/>
            <person name="Liu S."/>
            <person name="Yang X."/>
            <person name="Dong Y."/>
            <person name="Pan Y."/>
            <person name="Xiao Z."/>
            <person name="Zheng B."/>
            <person name="Sun Y."/>
            <person name="Huang P."/>
            <person name="Zhang X."/>
            <person name="Hu J."/>
            <person name="Sun R."/>
            <person name="Feng S."/>
            <person name="Zhu Y."/>
            <person name="Liu M."/>
            <person name="Gui M."/>
            <person name="Wu J."/>
        </authorList>
    </citation>
    <scope>STRUCTURE BY ELECTRON MICROSCOPY (3.50 ANGSTROMS) OF SPERM FLAGELLAR DOUBLET MICROTUBULES</scope>
    <scope>FUNCTION</scope>
    <scope>SUBCELLULAR LOCATION</scope>
    <scope>SUBUNIT</scope>
</reference>
<protein>
    <recommendedName>
        <fullName evidence="8">Protein SPMIP9</fullName>
    </recommendedName>
    <alternativeName>
        <fullName>Sperm microtubule inner protein 9</fullName>
    </alternativeName>
    <alternativeName>
        <fullName>Testis-expressed sequence 37 protein</fullName>
    </alternativeName>
    <alternativeName>
        <fullName>Testis-specific conserved protein of 21 kDa</fullName>
    </alternativeName>
</protein>
<accession>Q9DAG4</accession>
<accession>Q810N1</accession>
<evidence type="ECO:0000250" key="1">
    <source>
        <dbReference type="UniProtKB" id="Q96LM6"/>
    </source>
</evidence>
<evidence type="ECO:0000269" key="2">
    <source>
    </source>
</evidence>
<evidence type="ECO:0000269" key="3">
    <source>
    </source>
</evidence>
<evidence type="ECO:0000269" key="4">
    <source>
    </source>
</evidence>
<evidence type="ECO:0000303" key="5">
    <source>
    </source>
</evidence>
<evidence type="ECO:0000303" key="6">
    <source>
    </source>
</evidence>
<evidence type="ECO:0000303" key="7">
    <source>
    </source>
</evidence>
<evidence type="ECO:0000305" key="8"/>
<evidence type="ECO:0007744" key="9">
    <source>
        <dbReference type="PDB" id="8IYJ"/>
    </source>
</evidence>
<sequence length="180" mass="21041">MARVVRPQKNHVDLDIYQSSYMVDYKPFGKYKYSRVTPQEQAKLDAQLQSKEFYQPKPNPNPKLEEGYPAFRRPYMTALDLGVPGFFPPQERVTTRKDDGRFTTTCHYAYPASLALYLAQQDPYWLHQRADFPCLMEPERQPAPEVGKGYLLLPGCLCDHHQRVKVPILNRWGPLMPFYQ</sequence>
<name>SMIP9_MOUSE</name>
<keyword id="KW-0002">3D-structure</keyword>
<keyword id="KW-0025">Alternative splicing</keyword>
<keyword id="KW-0966">Cell projection</keyword>
<keyword id="KW-0969">Cilium</keyword>
<keyword id="KW-0963">Cytoplasm</keyword>
<keyword id="KW-0206">Cytoskeleton</keyword>
<keyword id="KW-0282">Flagellum</keyword>
<keyword id="KW-0539">Nucleus</keyword>
<keyword id="KW-1185">Reference proteome</keyword>